<accession>Q1E5T3</accession>
<accession>J3KKY9</accession>
<gene>
    <name type="primary">CHL1</name>
    <name type="ORF">CIMG_02080</name>
</gene>
<organism>
    <name type="scientific">Coccidioides immitis (strain RS)</name>
    <name type="common">Valley fever fungus</name>
    <dbReference type="NCBI Taxonomy" id="246410"/>
    <lineage>
        <taxon>Eukaryota</taxon>
        <taxon>Fungi</taxon>
        <taxon>Dikarya</taxon>
        <taxon>Ascomycota</taxon>
        <taxon>Pezizomycotina</taxon>
        <taxon>Eurotiomycetes</taxon>
        <taxon>Eurotiomycetidae</taxon>
        <taxon>Onygenales</taxon>
        <taxon>Onygenaceae</taxon>
        <taxon>Coccidioides</taxon>
    </lineage>
</organism>
<keyword id="KW-0067">ATP-binding</keyword>
<keyword id="KW-0131">Cell cycle</keyword>
<keyword id="KW-0238">DNA-binding</keyword>
<keyword id="KW-0347">Helicase</keyword>
<keyword id="KW-0378">Hydrolase</keyword>
<keyword id="KW-0408">Iron</keyword>
<keyword id="KW-0411">Iron-sulfur</keyword>
<keyword id="KW-0413">Isomerase</keyword>
<keyword id="KW-0479">Metal-binding</keyword>
<keyword id="KW-0547">Nucleotide-binding</keyword>
<keyword id="KW-0539">Nucleus</keyword>
<keyword id="KW-1185">Reference proteome</keyword>
<name>CHL1_COCIM</name>
<evidence type="ECO:0000250" key="1">
    <source>
        <dbReference type="UniProtKB" id="P18074"/>
    </source>
</evidence>
<evidence type="ECO:0000250" key="2">
    <source>
        <dbReference type="UniProtKB" id="P22516"/>
    </source>
</evidence>
<evidence type="ECO:0000250" key="3">
    <source>
        <dbReference type="UniProtKB" id="Q96FC9"/>
    </source>
</evidence>
<evidence type="ECO:0000255" key="4">
    <source>
        <dbReference type="PROSITE-ProRule" id="PRU00541"/>
    </source>
</evidence>
<evidence type="ECO:0000256" key="5">
    <source>
        <dbReference type="SAM" id="MobiDB-lite"/>
    </source>
</evidence>
<evidence type="ECO:0000305" key="6"/>
<feature type="chain" id="PRO_0000351008" description="ATP-dependent DNA helicase CHL1">
    <location>
        <begin position="1"/>
        <end position="861"/>
    </location>
</feature>
<feature type="domain" description="Helicase ATP-binding" evidence="4">
    <location>
        <begin position="4"/>
        <end position="428"/>
    </location>
</feature>
<feature type="region of interest" description="Disordered" evidence="5">
    <location>
        <begin position="220"/>
        <end position="250"/>
    </location>
</feature>
<feature type="short sequence motif" description="DEAH box">
    <location>
        <begin position="376"/>
        <end position="379"/>
    </location>
</feature>
<feature type="compositionally biased region" description="Basic and acidic residues" evidence="5">
    <location>
        <begin position="236"/>
        <end position="250"/>
    </location>
</feature>
<feature type="binding site" evidence="4">
    <location>
        <begin position="39"/>
        <end position="46"/>
    </location>
    <ligand>
        <name>ATP</name>
        <dbReference type="ChEBI" id="CHEBI:30616"/>
    </ligand>
</feature>
<feature type="binding site" evidence="1">
    <location>
        <position position="262"/>
    </location>
    <ligand>
        <name>[4Fe-4S] cluster</name>
        <dbReference type="ChEBI" id="CHEBI:49883"/>
    </ligand>
</feature>
<feature type="binding site" evidence="1">
    <location>
        <position position="280"/>
    </location>
    <ligand>
        <name>[4Fe-4S] cluster</name>
        <dbReference type="ChEBI" id="CHEBI:49883"/>
    </ligand>
</feature>
<feature type="binding site" evidence="1">
    <location>
        <position position="294"/>
    </location>
    <ligand>
        <name>[4Fe-4S] cluster</name>
        <dbReference type="ChEBI" id="CHEBI:49883"/>
    </ligand>
</feature>
<feature type="binding site" evidence="1">
    <location>
        <position position="333"/>
    </location>
    <ligand>
        <name>[4Fe-4S] cluster</name>
        <dbReference type="ChEBI" id="CHEBI:49883"/>
    </ligand>
</feature>
<proteinExistence type="inferred from homology"/>
<protein>
    <recommendedName>
        <fullName evidence="2">ATP-dependent DNA helicase CHL1</fullName>
        <ecNumber evidence="3">5.6.2.3</ecNumber>
    </recommendedName>
    <alternativeName>
        <fullName evidence="2">Chromosome loss protein 1</fullName>
    </alternativeName>
    <alternativeName>
        <fullName evidence="6">DNA 5'-3' helicase CHL1</fullName>
    </alternativeName>
</protein>
<sequence length="861" mass="97469">MNPSSKTFYHPYSPYDIQVQFMRSLYTCIEECKVGIFESPTGTGKSLSLICGSLTWLRDHKRSVFLEDIENSDGDDEPEWILQYSRKEKRRIIRERRKRVEDRLSRIRKEELLREKAAIANIPFKKQRLEDGKRHLDKMADDGAFELDEYDSDNQETSTHDAKSNSDLSATTIALLEKLSGSAEIQDDFEEENAVKIFYCSRTHSQLAQFARELRRVVFPPSIPPETEDGEIDTQGEGRRHPDTELEEPTKHVSLGSRKTMCINPKVRRLGNATAINERCLDLQSSNVLPGHKCPFAPSKENELAINDFRDHVLAEVHDIEDIGKIGQRTGICPYYASRSVIGHSEIVTLPYQLLLQKSARDALDISLKDHVIIIDEAHNLMDVIANIHSVNVSLTQLRIGLEQLTIYARKYKARLKGKNRVYVAQVMRLLGSIAKYLESVLAARELREGAVDPSYLMSGKGIDQINLHKLSRYLQESKLARKVDGYIESSTSLEEKNPETSTTVPVLFQVQSFLLSLMNPSAEGRLFFEKNGNDVLLKYTLLDPTAHFREAVEEARAVILAGGTMSPMSDYRDHLFSYLAPGQLRTFSYGHVIPTSNLSARPVSRGILDTEFDFTFEKRNSRAMIIDLGKTISEICKATPDGVVAFFPSYDFLNQVVEIWKQPCSNSGNPSILDSLGLVKPLLYESKEKAMNTEALLQKYANFIDEGKGALLLSVMGGKLSEGINFSDRLGRGVIVIGLPFANIRSAEWQAKIQYVERKTYERSSGGEETRRSKAKLAGRDFYENACMRVVNQCIGRAIRHQHDYAAILMFDRRYGTARIQSKLPEWIRRSLISAPIGATISNLYTFFEEKSSIEVTKEK</sequence>
<reference key="1">
    <citation type="journal article" date="2009" name="Genome Res.">
        <title>Comparative genomic analyses of the human fungal pathogens Coccidioides and their relatives.</title>
        <authorList>
            <person name="Sharpton T.J."/>
            <person name="Stajich J.E."/>
            <person name="Rounsley S.D."/>
            <person name="Gardner M.J."/>
            <person name="Wortman J.R."/>
            <person name="Jordar V.S."/>
            <person name="Maiti R."/>
            <person name="Kodira C.D."/>
            <person name="Neafsey D.E."/>
            <person name="Zeng Q."/>
            <person name="Hung C.-Y."/>
            <person name="McMahan C."/>
            <person name="Muszewska A."/>
            <person name="Grynberg M."/>
            <person name="Mandel M.A."/>
            <person name="Kellner E.M."/>
            <person name="Barker B.M."/>
            <person name="Galgiani J.N."/>
            <person name="Orbach M.J."/>
            <person name="Kirkland T.N."/>
            <person name="Cole G.T."/>
            <person name="Henn M.R."/>
            <person name="Birren B.W."/>
            <person name="Taylor J.W."/>
        </authorList>
    </citation>
    <scope>NUCLEOTIDE SEQUENCE [LARGE SCALE GENOMIC DNA]</scope>
    <source>
        <strain>RS</strain>
    </source>
</reference>
<reference key="2">
    <citation type="journal article" date="2010" name="Genome Res.">
        <title>Population genomic sequencing of Coccidioides fungi reveals recent hybridization and transposon control.</title>
        <authorList>
            <person name="Neafsey D.E."/>
            <person name="Barker B.M."/>
            <person name="Sharpton T.J."/>
            <person name="Stajich J.E."/>
            <person name="Park D.J."/>
            <person name="Whiston E."/>
            <person name="Hung C.-Y."/>
            <person name="McMahan C."/>
            <person name="White J."/>
            <person name="Sykes S."/>
            <person name="Heiman D."/>
            <person name="Young S."/>
            <person name="Zeng Q."/>
            <person name="Abouelleil A."/>
            <person name="Aftuck L."/>
            <person name="Bessette D."/>
            <person name="Brown A."/>
            <person name="FitzGerald M."/>
            <person name="Lui A."/>
            <person name="Macdonald J.P."/>
            <person name="Priest M."/>
            <person name="Orbach M.J."/>
            <person name="Galgiani J.N."/>
            <person name="Kirkland T.N."/>
            <person name="Cole G.T."/>
            <person name="Birren B.W."/>
            <person name="Henn M.R."/>
            <person name="Taylor J.W."/>
            <person name="Rounsley S.D."/>
        </authorList>
    </citation>
    <scope>GENOME REANNOTATION</scope>
    <source>
        <strain>RS</strain>
    </source>
</reference>
<comment type="function">
    <text evidence="2">ATP-dependent DNA helicase important for chromosome transmission and normal cell cycle progression in G(2)/M (By similarity). May have a role in changing DNA topology to allow the loading of proteins involved in maintaining sister chromatid cohesion in the vicinity of the centromeres (By similarity). Has a specific role in chromosome segregation during meiosis II (By similarity).</text>
</comment>
<comment type="catalytic activity">
    <reaction evidence="3">
        <text>Couples ATP hydrolysis with the unwinding of duplex DNA at the replication fork by translocating in the 5'-3' direction. This creates two antiparallel DNA single strands (ssDNA). The leading ssDNA polymer is the template for DNA polymerase III holoenzyme which synthesizes a continuous strand.</text>
        <dbReference type="EC" id="5.6.2.3"/>
    </reaction>
</comment>
<comment type="catalytic activity">
    <reaction evidence="3">
        <text>ATP + H2O = ADP + phosphate + H(+)</text>
        <dbReference type="Rhea" id="RHEA:13065"/>
        <dbReference type="ChEBI" id="CHEBI:15377"/>
        <dbReference type="ChEBI" id="CHEBI:15378"/>
        <dbReference type="ChEBI" id="CHEBI:30616"/>
        <dbReference type="ChEBI" id="CHEBI:43474"/>
        <dbReference type="ChEBI" id="CHEBI:456216"/>
        <dbReference type="EC" id="5.6.2.3"/>
    </reaction>
</comment>
<comment type="cofactor">
    <cofactor evidence="1">
        <name>[4Fe-4S] cluster</name>
        <dbReference type="ChEBI" id="CHEBI:49883"/>
    </cofactor>
    <text evidence="1">Binds 1 [4Fe-4S] cluster.</text>
</comment>
<comment type="subcellular location">
    <subcellularLocation>
        <location evidence="2">Nucleus</location>
    </subcellularLocation>
</comment>
<comment type="similarity">
    <text evidence="6">Belongs to the DEAD box helicase family. DEAH subfamily. DDX11/CHL1 sub-subfamily.</text>
</comment>
<comment type="sequence caution" evidence="6">
    <conflict type="erroneous gene model prediction">
        <sequence resource="EMBL-CDS" id="EAS36726"/>
    </conflict>
</comment>
<dbReference type="EC" id="5.6.2.3" evidence="3"/>
<dbReference type="EMBL" id="GG704911">
    <property type="protein sequence ID" value="EAS36726.3"/>
    <property type="status" value="ALT_SEQ"/>
    <property type="molecule type" value="Genomic_DNA"/>
</dbReference>
<dbReference type="RefSeq" id="XP_001248309.2">
    <property type="nucleotide sequence ID" value="XM_001248308.2"/>
</dbReference>
<dbReference type="SMR" id="Q1E5T3"/>
<dbReference type="FunCoup" id="Q1E5T3">
    <property type="interactions" value="956"/>
</dbReference>
<dbReference type="STRING" id="246410.Q1E5T3"/>
<dbReference type="GeneID" id="4565999"/>
<dbReference type="KEGG" id="cim:CIMG_02080"/>
<dbReference type="InParanoid" id="Q1E5T3"/>
<dbReference type="OrthoDB" id="267079at2759"/>
<dbReference type="Proteomes" id="UP000001261">
    <property type="component" value="Unassembled WGS sequence"/>
</dbReference>
<dbReference type="GO" id="GO:0005634">
    <property type="term" value="C:nucleus"/>
    <property type="evidence" value="ECO:0007669"/>
    <property type="project" value="UniProtKB-SubCell"/>
</dbReference>
<dbReference type="GO" id="GO:0005524">
    <property type="term" value="F:ATP binding"/>
    <property type="evidence" value="ECO:0007669"/>
    <property type="project" value="UniProtKB-KW"/>
</dbReference>
<dbReference type="GO" id="GO:0016887">
    <property type="term" value="F:ATP hydrolysis activity"/>
    <property type="evidence" value="ECO:0007669"/>
    <property type="project" value="RHEA"/>
</dbReference>
<dbReference type="GO" id="GO:0003677">
    <property type="term" value="F:DNA binding"/>
    <property type="evidence" value="ECO:0007669"/>
    <property type="project" value="UniProtKB-KW"/>
</dbReference>
<dbReference type="GO" id="GO:0003678">
    <property type="term" value="F:DNA helicase activity"/>
    <property type="evidence" value="ECO:0007669"/>
    <property type="project" value="InterPro"/>
</dbReference>
<dbReference type="GO" id="GO:0051536">
    <property type="term" value="F:iron-sulfur cluster binding"/>
    <property type="evidence" value="ECO:0007669"/>
    <property type="project" value="UniProtKB-KW"/>
</dbReference>
<dbReference type="GO" id="GO:0046872">
    <property type="term" value="F:metal ion binding"/>
    <property type="evidence" value="ECO:0007669"/>
    <property type="project" value="UniProtKB-KW"/>
</dbReference>
<dbReference type="GO" id="GO:0034085">
    <property type="term" value="P:establishment of sister chromatid cohesion"/>
    <property type="evidence" value="ECO:0007669"/>
    <property type="project" value="TreeGrafter"/>
</dbReference>
<dbReference type="GO" id="GO:0006139">
    <property type="term" value="P:nucleobase-containing compound metabolic process"/>
    <property type="evidence" value="ECO:0007669"/>
    <property type="project" value="InterPro"/>
</dbReference>
<dbReference type="CDD" id="cd18788">
    <property type="entry name" value="SF2_C_XPD"/>
    <property type="match status" value="1"/>
</dbReference>
<dbReference type="FunFam" id="3.40.50.300:FF:001372">
    <property type="entry name" value="ATP-dependent DNA helicase chl1"/>
    <property type="match status" value="1"/>
</dbReference>
<dbReference type="FunFam" id="3.40.50.300:FF:002774">
    <property type="entry name" value="ATP-dependent DNA helicase chl1"/>
    <property type="match status" value="1"/>
</dbReference>
<dbReference type="Gene3D" id="3.40.50.300">
    <property type="entry name" value="P-loop containing nucleotide triphosphate hydrolases"/>
    <property type="match status" value="3"/>
</dbReference>
<dbReference type="InterPro" id="IPR006555">
    <property type="entry name" value="ATP-dep_Helicase_C"/>
</dbReference>
<dbReference type="InterPro" id="IPR045028">
    <property type="entry name" value="DinG/Rad3-like"/>
</dbReference>
<dbReference type="InterPro" id="IPR014013">
    <property type="entry name" value="Helic_SF1/SF2_ATP-bd_DinG/Rad3"/>
</dbReference>
<dbReference type="InterPro" id="IPR006554">
    <property type="entry name" value="Helicase-like_DEXD_c2"/>
</dbReference>
<dbReference type="InterPro" id="IPR027417">
    <property type="entry name" value="P-loop_NTPase"/>
</dbReference>
<dbReference type="InterPro" id="IPR010614">
    <property type="entry name" value="RAD3-like_helicase_DEAD"/>
</dbReference>
<dbReference type="InterPro" id="IPR013020">
    <property type="entry name" value="Rad3/Chl1-like"/>
</dbReference>
<dbReference type="NCBIfam" id="TIGR00604">
    <property type="entry name" value="rad3"/>
    <property type="match status" value="1"/>
</dbReference>
<dbReference type="PANTHER" id="PTHR11472:SF41">
    <property type="entry name" value="ATP-DEPENDENT DNA HELICASE DDX11-RELATED"/>
    <property type="match status" value="1"/>
</dbReference>
<dbReference type="PANTHER" id="PTHR11472">
    <property type="entry name" value="DNA REPAIR DEAD HELICASE RAD3/XP-D SUBFAMILY MEMBER"/>
    <property type="match status" value="1"/>
</dbReference>
<dbReference type="Pfam" id="PF06733">
    <property type="entry name" value="DEAD_2"/>
    <property type="match status" value="1"/>
</dbReference>
<dbReference type="Pfam" id="PF13307">
    <property type="entry name" value="Helicase_C_2"/>
    <property type="match status" value="1"/>
</dbReference>
<dbReference type="SMART" id="SM00488">
    <property type="entry name" value="DEXDc2"/>
    <property type="match status" value="1"/>
</dbReference>
<dbReference type="SMART" id="SM00491">
    <property type="entry name" value="HELICc2"/>
    <property type="match status" value="1"/>
</dbReference>
<dbReference type="SUPFAM" id="SSF52540">
    <property type="entry name" value="P-loop containing nucleoside triphosphate hydrolases"/>
    <property type="match status" value="1"/>
</dbReference>
<dbReference type="PROSITE" id="PS00690">
    <property type="entry name" value="DEAH_ATP_HELICASE"/>
    <property type="match status" value="1"/>
</dbReference>
<dbReference type="PROSITE" id="PS51193">
    <property type="entry name" value="HELICASE_ATP_BIND_2"/>
    <property type="match status" value="1"/>
</dbReference>